<accession>P79182</accession>
<proteinExistence type="evidence at transcript level"/>
<organism>
    <name type="scientific">Macaca fascicularis</name>
    <name type="common">Crab-eating macaque</name>
    <name type="synonym">Cynomolgus monkey</name>
    <dbReference type="NCBI Taxonomy" id="9541"/>
    <lineage>
        <taxon>Eukaryota</taxon>
        <taxon>Metazoa</taxon>
        <taxon>Chordata</taxon>
        <taxon>Craniata</taxon>
        <taxon>Vertebrata</taxon>
        <taxon>Euteleostomi</taxon>
        <taxon>Mammalia</taxon>
        <taxon>Eutheria</taxon>
        <taxon>Euarchontoglires</taxon>
        <taxon>Primates</taxon>
        <taxon>Haplorrhini</taxon>
        <taxon>Catarrhini</taxon>
        <taxon>Cercopithecidae</taxon>
        <taxon>Cercopithecinae</taxon>
        <taxon>Macaca</taxon>
    </lineage>
</organism>
<sequence>MAEVPELASEMMAYYSGNEDDLFFDVDGPKQMKCSFQDLDLCPLDGGIQLQISHEHYNEGFRQAVSVVVAMEKLRKMLVPCPQIFQDNDLSTLIPFIFEEEPVFLDTRNNDACVHDAPVRSLHCTLRDAQLKSLVMSGPYELKALHLQGQDLEQQVVFSMSFVQGEESNDKIPVALGLKAKNLYLSCVLKDDKPTLQLESVDPKNYPKKKMEKRFVFNKIEINNKLEFESAQFPNWYISTSQAESMPVFLGGTRGGQDITDFTMQFVS</sequence>
<keyword id="KW-0202">Cytokine</keyword>
<keyword id="KW-0963">Cytoplasm</keyword>
<keyword id="KW-0395">Inflammatory response</keyword>
<keyword id="KW-0458">Lysosome</keyword>
<keyword id="KW-0497">Mitogen</keyword>
<keyword id="KW-0666">Pyrogen</keyword>
<keyword id="KW-1185">Reference proteome</keyword>
<keyword id="KW-0964">Secreted</keyword>
<evidence type="ECO:0000250" key="1"/>
<evidence type="ECO:0000250" key="2">
    <source>
        <dbReference type="UniProtKB" id="P01584"/>
    </source>
</evidence>
<evidence type="ECO:0000250" key="3">
    <source>
        <dbReference type="UniProtKB" id="P10749"/>
    </source>
</evidence>
<evidence type="ECO:0000305" key="4"/>
<protein>
    <recommendedName>
        <fullName>Interleukin-1 beta</fullName>
        <shortName>IL-1 beta</shortName>
    </recommendedName>
</protein>
<comment type="function">
    <text evidence="2">Potent pro-inflammatory cytokine. Initially discovered as the major endogenous pyrogen, induces prostaglandin synthesis, neutrophil influx and activation, T-cell activation and cytokine production, B-cell activation and antibody production, and fibroblast proliferation and collagen production. Promotes Th17 differentiation of T-cells. Synergizes with IL12/interleukin-12 to induce IFNG synthesis from T-helper 1 (Th1) cells. Plays a role in angiogenesis by inducing VEGF production synergistically with TNF and IL6. Involved in transduction of inflammation downstream of pyroptosis: its mature form is specifically released in the extracellular milieu by passing through the gasdermin-D (GSDMD) pore.</text>
</comment>
<comment type="subunit">
    <text evidence="2">Monomer. In its precursor form, weakly interacts with full-length MEFV; the mature cytokine does not interact at all. Interacts with integrins ITGAV:ITGBV and ITGA5:ITGB1; integrin-binding is required for IL1B signaling. Interacts with cargo receptor TMED10; the interaction is direct and is required for the secretion of IL1B mature form. Interacts with HSP90AB1; the interaction facilitates cargo translocation into the ERGIC. Interacts with HSP90B1; the interaction facilitates cargo translocation into the ERGIC.</text>
</comment>
<comment type="subcellular location">
    <subcellularLocation>
        <location evidence="2">Cytoplasm</location>
        <location evidence="2">Cytosol</location>
    </subcellularLocation>
    <subcellularLocation>
        <location evidence="2">Secreted</location>
    </subcellularLocation>
    <subcellularLocation>
        <location evidence="2">Lysosome</location>
    </subcellularLocation>
    <subcellularLocation>
        <location evidence="3">Secreted</location>
        <location evidence="3">Extracellular exosome</location>
    </subcellularLocation>
    <text evidence="2">The precursor is cytosolic. In response to inflammasome-activating signals, such as ATP for NLRP3 inflammasome or bacterial flagellin for NLRC4 inflammasome, cleaved and secreted. Mature form is secreted and released in the extracellular milieu by passing through the gasdermin-D (GSDMD) pore. In contrast, the precursor form is not released, due to the presence of an acidic region that is proteolytically removed by CASP1 during maturation. The secretion is dependent on protein unfolding and facilitated by the cargo receptor TMED10.</text>
</comment>
<comment type="miscellaneous">
    <text evidence="1">IL1B production occurs in 2 steps, each being controlled by different stimuli. First, inflammatory signals, such as LPS, stimulate the synthesis and promote the accumulation of cytosolic stores of pro-IL1B (priming). Then additional signals are required for inflammasome assembly, leading to CASP1 activation, pro-IL1B processing and eventually secretion of the active cytokine. IL1B processing and secretion are temporarily associated.</text>
</comment>
<comment type="similarity">
    <text evidence="4">Belongs to the IL-1 family.</text>
</comment>
<dbReference type="EMBL" id="D63353">
    <property type="protein sequence ID" value="BAA09677.1"/>
    <property type="molecule type" value="mRNA"/>
</dbReference>
<dbReference type="SMR" id="P79182"/>
<dbReference type="STRING" id="9541.ENSMFAP00000022744"/>
<dbReference type="ABCD" id="P79182">
    <property type="antibodies" value="1 sequenced antibody"/>
</dbReference>
<dbReference type="eggNOG" id="ENOG502S3E9">
    <property type="taxonomic scope" value="Eukaryota"/>
</dbReference>
<dbReference type="Proteomes" id="UP000233100">
    <property type="component" value="Unplaced"/>
</dbReference>
<dbReference type="GO" id="GO:0005829">
    <property type="term" value="C:cytosol"/>
    <property type="evidence" value="ECO:0007669"/>
    <property type="project" value="UniProtKB-SubCell"/>
</dbReference>
<dbReference type="GO" id="GO:0005615">
    <property type="term" value="C:extracellular space"/>
    <property type="evidence" value="ECO:0007669"/>
    <property type="project" value="UniProtKB-KW"/>
</dbReference>
<dbReference type="GO" id="GO:0005764">
    <property type="term" value="C:lysosome"/>
    <property type="evidence" value="ECO:0007669"/>
    <property type="project" value="UniProtKB-SubCell"/>
</dbReference>
<dbReference type="GO" id="GO:0005125">
    <property type="term" value="F:cytokine activity"/>
    <property type="evidence" value="ECO:0007669"/>
    <property type="project" value="UniProtKB-KW"/>
</dbReference>
<dbReference type="GO" id="GO:0005178">
    <property type="term" value="F:integrin binding"/>
    <property type="evidence" value="ECO:0000250"/>
    <property type="project" value="UniProtKB"/>
</dbReference>
<dbReference type="GO" id="GO:0005149">
    <property type="term" value="F:interleukin-1 receptor binding"/>
    <property type="evidence" value="ECO:0007669"/>
    <property type="project" value="InterPro"/>
</dbReference>
<dbReference type="GO" id="GO:0071222">
    <property type="term" value="P:cellular response to lipopolysaccharide"/>
    <property type="evidence" value="ECO:0007669"/>
    <property type="project" value="TreeGrafter"/>
</dbReference>
<dbReference type="GO" id="GO:0019221">
    <property type="term" value="P:cytokine-mediated signaling pathway"/>
    <property type="evidence" value="ECO:0007669"/>
    <property type="project" value="TreeGrafter"/>
</dbReference>
<dbReference type="GO" id="GO:0001660">
    <property type="term" value="P:fever generation"/>
    <property type="evidence" value="ECO:0007669"/>
    <property type="project" value="UniProtKB-KW"/>
</dbReference>
<dbReference type="GO" id="GO:0006955">
    <property type="term" value="P:immune response"/>
    <property type="evidence" value="ECO:0007669"/>
    <property type="project" value="InterPro"/>
</dbReference>
<dbReference type="GO" id="GO:0051781">
    <property type="term" value="P:positive regulation of cell division"/>
    <property type="evidence" value="ECO:0007669"/>
    <property type="project" value="UniProtKB-KW"/>
</dbReference>
<dbReference type="GO" id="GO:0033092">
    <property type="term" value="P:positive regulation of immature T cell proliferation in thymus"/>
    <property type="evidence" value="ECO:0007669"/>
    <property type="project" value="TreeGrafter"/>
</dbReference>
<dbReference type="GO" id="GO:2000556">
    <property type="term" value="P:positive regulation of T-helper 1 cell cytokine production"/>
    <property type="evidence" value="ECO:0000250"/>
    <property type="project" value="UniProtKB"/>
</dbReference>
<dbReference type="GO" id="GO:0032729">
    <property type="term" value="P:positive regulation of type II interferon production"/>
    <property type="evidence" value="ECO:0000250"/>
    <property type="project" value="UniProtKB"/>
</dbReference>
<dbReference type="GO" id="GO:0010573">
    <property type="term" value="P:vascular endothelial growth factor production"/>
    <property type="evidence" value="ECO:0000250"/>
    <property type="project" value="UniProtKB"/>
</dbReference>
<dbReference type="CDD" id="cd23296">
    <property type="entry name" value="beta-trefoil_IL1B"/>
    <property type="match status" value="1"/>
</dbReference>
<dbReference type="FunFam" id="2.80.10.50:FF:000027">
    <property type="entry name" value="Interleukin-1 beta"/>
    <property type="match status" value="1"/>
</dbReference>
<dbReference type="Gene3D" id="2.80.10.50">
    <property type="match status" value="1"/>
</dbReference>
<dbReference type="InterPro" id="IPR020877">
    <property type="entry name" value="IL-1_CS"/>
</dbReference>
<dbReference type="InterPro" id="IPR000975">
    <property type="entry name" value="IL-1_fam"/>
</dbReference>
<dbReference type="InterPro" id="IPR003502">
    <property type="entry name" value="IL-1_propep"/>
</dbReference>
<dbReference type="InterPro" id="IPR008996">
    <property type="entry name" value="IL1/FGF"/>
</dbReference>
<dbReference type="PANTHER" id="PTHR10078:SF30">
    <property type="entry name" value="INTERLEUKIN-1 BETA"/>
    <property type="match status" value="1"/>
</dbReference>
<dbReference type="PANTHER" id="PTHR10078">
    <property type="entry name" value="INTERLEUKIN-1 FAMILY MEMBER"/>
    <property type="match status" value="1"/>
</dbReference>
<dbReference type="Pfam" id="PF00340">
    <property type="entry name" value="IL1"/>
    <property type="match status" value="1"/>
</dbReference>
<dbReference type="Pfam" id="PF02394">
    <property type="entry name" value="IL1_propep"/>
    <property type="match status" value="1"/>
</dbReference>
<dbReference type="PRINTS" id="PR00262">
    <property type="entry name" value="IL1HBGF"/>
</dbReference>
<dbReference type="PRINTS" id="PR00264">
    <property type="entry name" value="INTERLEUKIN1"/>
</dbReference>
<dbReference type="PRINTS" id="PR01359">
    <property type="entry name" value="INTRLEUKIN1B"/>
</dbReference>
<dbReference type="PRINTS" id="PR01357">
    <property type="entry name" value="INTRLEUKN1AB"/>
</dbReference>
<dbReference type="SMART" id="SM00125">
    <property type="entry name" value="IL1"/>
    <property type="match status" value="1"/>
</dbReference>
<dbReference type="SUPFAM" id="SSF50353">
    <property type="entry name" value="Cytokine"/>
    <property type="match status" value="1"/>
</dbReference>
<dbReference type="PROSITE" id="PS00253">
    <property type="entry name" value="INTERLEUKIN_1"/>
    <property type="match status" value="1"/>
</dbReference>
<name>IL1B_MACFA</name>
<gene>
    <name type="primary">IL1B</name>
</gene>
<feature type="propeptide" id="PRO_0000015305" evidence="1">
    <location>
        <begin position="1"/>
        <end position="116"/>
    </location>
</feature>
<feature type="chain" id="PRO_0000015306" description="Interleukin-1 beta">
    <location>
        <begin position="117"/>
        <end position="268"/>
    </location>
</feature>
<feature type="site" description="Important for interaction with integrin" evidence="2">
    <location>
        <position position="171"/>
    </location>
</feature>
<feature type="site" description="Important for interaction with integrin" evidence="2">
    <location>
        <position position="179"/>
    </location>
</feature>
<feature type="site" description="Important for interaction with integrin" evidence="2">
    <location>
        <position position="181"/>
    </location>
</feature>
<feature type="site" description="Important for interaction with integrin" evidence="2">
    <location>
        <position position="190"/>
    </location>
</feature>
<feature type="site" description="Important for interaction with integrin" evidence="2">
    <location>
        <position position="204"/>
    </location>
</feature>
<reference key="1">
    <citation type="journal article" date="1998" name="Int. Arch. Allergy Immunol.">
        <title>Molecular cloning and expression of cynomolgus monkey interleukin-1beta cDNA.</title>
        <authorList>
            <person name="Totsuka K."/>
            <person name="Takakura H."/>
            <person name="Hashimoto O."/>
            <person name="Tatsumi M."/>
        </authorList>
    </citation>
    <scope>NUCLEOTIDE SEQUENCE [MRNA]</scope>
    <source>
        <tissue>Thymus</tissue>
    </source>
</reference>